<feature type="chain" id="PRO_0000232095" description="Phenylalanine--tRNA ligase beta subunit">
    <location>
        <begin position="1"/>
        <end position="781"/>
    </location>
</feature>
<feature type="domain" description="tRNA-binding" evidence="1">
    <location>
        <begin position="39"/>
        <end position="147"/>
    </location>
</feature>
<feature type="domain" description="B5" evidence="1">
    <location>
        <begin position="398"/>
        <end position="473"/>
    </location>
</feature>
<feature type="domain" description="FDX-ACB" evidence="1">
    <location>
        <begin position="687"/>
        <end position="780"/>
    </location>
</feature>
<feature type="binding site" evidence="1">
    <location>
        <position position="451"/>
    </location>
    <ligand>
        <name>Mg(2+)</name>
        <dbReference type="ChEBI" id="CHEBI:18420"/>
        <note>shared with alpha subunit</note>
    </ligand>
</feature>
<feature type="binding site" evidence="1">
    <location>
        <position position="457"/>
    </location>
    <ligand>
        <name>Mg(2+)</name>
        <dbReference type="ChEBI" id="CHEBI:18420"/>
        <note>shared with alpha subunit</note>
    </ligand>
</feature>
<feature type="binding site" evidence="1">
    <location>
        <position position="460"/>
    </location>
    <ligand>
        <name>Mg(2+)</name>
        <dbReference type="ChEBI" id="CHEBI:18420"/>
        <note>shared with alpha subunit</note>
    </ligand>
</feature>
<feature type="binding site" evidence="1">
    <location>
        <position position="461"/>
    </location>
    <ligand>
        <name>Mg(2+)</name>
        <dbReference type="ChEBI" id="CHEBI:18420"/>
        <note>shared with alpha subunit</note>
    </ligand>
</feature>
<accession>Q3SK29</accession>
<gene>
    <name evidence="1" type="primary">pheT</name>
    <name type="ordered locus">Tbd_1012</name>
</gene>
<proteinExistence type="inferred from homology"/>
<comment type="catalytic activity">
    <reaction evidence="1">
        <text>tRNA(Phe) + L-phenylalanine + ATP = L-phenylalanyl-tRNA(Phe) + AMP + diphosphate + H(+)</text>
        <dbReference type="Rhea" id="RHEA:19413"/>
        <dbReference type="Rhea" id="RHEA-COMP:9668"/>
        <dbReference type="Rhea" id="RHEA-COMP:9699"/>
        <dbReference type="ChEBI" id="CHEBI:15378"/>
        <dbReference type="ChEBI" id="CHEBI:30616"/>
        <dbReference type="ChEBI" id="CHEBI:33019"/>
        <dbReference type="ChEBI" id="CHEBI:58095"/>
        <dbReference type="ChEBI" id="CHEBI:78442"/>
        <dbReference type="ChEBI" id="CHEBI:78531"/>
        <dbReference type="ChEBI" id="CHEBI:456215"/>
        <dbReference type="EC" id="6.1.1.20"/>
    </reaction>
</comment>
<comment type="cofactor">
    <cofactor evidence="1">
        <name>Mg(2+)</name>
        <dbReference type="ChEBI" id="CHEBI:18420"/>
    </cofactor>
    <text evidence="1">Binds 2 magnesium ions per tetramer.</text>
</comment>
<comment type="subunit">
    <text evidence="1">Tetramer of two alpha and two beta subunits.</text>
</comment>
<comment type="subcellular location">
    <subcellularLocation>
        <location evidence="1">Cytoplasm</location>
    </subcellularLocation>
</comment>
<comment type="similarity">
    <text evidence="1">Belongs to the phenylalanyl-tRNA synthetase beta subunit family. Type 1 subfamily.</text>
</comment>
<sequence length="781" mass="83930">MQFSEAWLRKLVNPALDTTELAHALTMAGLEVEALTAAAPPFNDVVVAEILSAQKHPDADRLRVCQVDIGEAAPATIVCGAPNAAAGLKVPCARPGAKLPGIEIKVAKVRGVESFGMLCSTKELGLEGAADGLMVLPDDAPVGEDLRGWLNLDDTLVTLKLTPNRADCLSLVGIAREVGAITGAEVRIPQASPVAPRIADTVEVTVAASDACSRYLGRVVRGIDAQATTPRWMAERLERGGIRPLLAPIDVTNYVLLELGQPMHAFALSRLSGGIEVRLARAGETLALLSGQTVELSPDMLVIADASGPVALAGIMGGQATSVERATVDVFLEAAFFAPAAIAGRARRLGLSTDSAHRFERGVDFGAIHAAMERATQLLLDICGGQPGPISEVTGSLPRREPIELRLSRLRRVAGVELGADQVIRDLAALGCVVEQADERLVVTPPSFRFDLAIEEDLIEEAVRLFGYDRIPARPPAAPSRMLAQDETRIADDALRQKMVDLDYQEVITYSFVDPAGEQALDPDVRLLTLANPIASQLSVMRTTLWGGLIETLRHNLNRQQERVRIFELGRVYASLAEQPRKLGGLAYGEALPEQWGVPGRRVDFFDVKGDLERLFGQPLDAGRGEHPALHPGQSAALWVDGHRGGWIGALHPRLVQAFDLAAAPVLFELDSEILARRALPRHAGLSRFPQVRRDLAFVLDAGLAAGDLLAALREAAPASIRAIEVFDDYRGKGVDQNQKSLAIRVVMQDTERTLTDRDVDEAVQKLVDAAARRCSATLRA</sequence>
<name>SYFB_THIDA</name>
<evidence type="ECO:0000255" key="1">
    <source>
        <dbReference type="HAMAP-Rule" id="MF_00283"/>
    </source>
</evidence>
<dbReference type="EC" id="6.1.1.20" evidence="1"/>
<dbReference type="EMBL" id="CP000116">
    <property type="protein sequence ID" value="AAZ96965.1"/>
    <property type="molecule type" value="Genomic_DNA"/>
</dbReference>
<dbReference type="RefSeq" id="WP_011311524.1">
    <property type="nucleotide sequence ID" value="NC_007404.1"/>
</dbReference>
<dbReference type="SMR" id="Q3SK29"/>
<dbReference type="STRING" id="292415.Tbd_1012"/>
<dbReference type="KEGG" id="tbd:Tbd_1012"/>
<dbReference type="eggNOG" id="COG0072">
    <property type="taxonomic scope" value="Bacteria"/>
</dbReference>
<dbReference type="eggNOG" id="COG0073">
    <property type="taxonomic scope" value="Bacteria"/>
</dbReference>
<dbReference type="HOGENOM" id="CLU_016891_0_0_4"/>
<dbReference type="OrthoDB" id="9805455at2"/>
<dbReference type="Proteomes" id="UP000008291">
    <property type="component" value="Chromosome"/>
</dbReference>
<dbReference type="GO" id="GO:0009328">
    <property type="term" value="C:phenylalanine-tRNA ligase complex"/>
    <property type="evidence" value="ECO:0007669"/>
    <property type="project" value="TreeGrafter"/>
</dbReference>
<dbReference type="GO" id="GO:0005524">
    <property type="term" value="F:ATP binding"/>
    <property type="evidence" value="ECO:0007669"/>
    <property type="project" value="UniProtKB-UniRule"/>
</dbReference>
<dbReference type="GO" id="GO:0000287">
    <property type="term" value="F:magnesium ion binding"/>
    <property type="evidence" value="ECO:0007669"/>
    <property type="project" value="UniProtKB-UniRule"/>
</dbReference>
<dbReference type="GO" id="GO:0004826">
    <property type="term" value="F:phenylalanine-tRNA ligase activity"/>
    <property type="evidence" value="ECO:0007669"/>
    <property type="project" value="UniProtKB-UniRule"/>
</dbReference>
<dbReference type="GO" id="GO:0000049">
    <property type="term" value="F:tRNA binding"/>
    <property type="evidence" value="ECO:0007669"/>
    <property type="project" value="UniProtKB-KW"/>
</dbReference>
<dbReference type="GO" id="GO:0006432">
    <property type="term" value="P:phenylalanyl-tRNA aminoacylation"/>
    <property type="evidence" value="ECO:0007669"/>
    <property type="project" value="UniProtKB-UniRule"/>
</dbReference>
<dbReference type="CDD" id="cd00769">
    <property type="entry name" value="PheRS_beta_core"/>
    <property type="match status" value="1"/>
</dbReference>
<dbReference type="CDD" id="cd02796">
    <property type="entry name" value="tRNA_bind_bactPheRS"/>
    <property type="match status" value="1"/>
</dbReference>
<dbReference type="FunFam" id="2.40.50.140:FF:000045">
    <property type="entry name" value="Phenylalanine--tRNA ligase beta subunit"/>
    <property type="match status" value="1"/>
</dbReference>
<dbReference type="FunFam" id="3.30.56.10:FF:000002">
    <property type="entry name" value="Phenylalanine--tRNA ligase beta subunit"/>
    <property type="match status" value="1"/>
</dbReference>
<dbReference type="FunFam" id="3.30.70.380:FF:000001">
    <property type="entry name" value="Phenylalanine--tRNA ligase beta subunit"/>
    <property type="match status" value="1"/>
</dbReference>
<dbReference type="FunFam" id="3.50.40.10:FF:000001">
    <property type="entry name" value="Phenylalanine--tRNA ligase beta subunit"/>
    <property type="match status" value="1"/>
</dbReference>
<dbReference type="Gene3D" id="3.30.56.10">
    <property type="match status" value="2"/>
</dbReference>
<dbReference type="Gene3D" id="3.30.930.10">
    <property type="entry name" value="Bira Bifunctional Protein, Domain 2"/>
    <property type="match status" value="1"/>
</dbReference>
<dbReference type="Gene3D" id="3.30.70.380">
    <property type="entry name" value="Ferrodoxin-fold anticodon-binding domain"/>
    <property type="match status" value="1"/>
</dbReference>
<dbReference type="Gene3D" id="2.40.50.140">
    <property type="entry name" value="Nucleic acid-binding proteins"/>
    <property type="match status" value="1"/>
</dbReference>
<dbReference type="Gene3D" id="3.50.40.10">
    <property type="entry name" value="Phenylalanyl-trna Synthetase, Chain B, domain 3"/>
    <property type="match status" value="1"/>
</dbReference>
<dbReference type="HAMAP" id="MF_00283">
    <property type="entry name" value="Phe_tRNA_synth_beta1"/>
    <property type="match status" value="1"/>
</dbReference>
<dbReference type="InterPro" id="IPR045864">
    <property type="entry name" value="aa-tRNA-synth_II/BPL/LPL"/>
</dbReference>
<dbReference type="InterPro" id="IPR005146">
    <property type="entry name" value="B3/B4_tRNA-bd"/>
</dbReference>
<dbReference type="InterPro" id="IPR009061">
    <property type="entry name" value="DNA-bd_dom_put_sf"/>
</dbReference>
<dbReference type="InterPro" id="IPR005121">
    <property type="entry name" value="Fdx_antiC-bd"/>
</dbReference>
<dbReference type="InterPro" id="IPR036690">
    <property type="entry name" value="Fdx_antiC-bd_sf"/>
</dbReference>
<dbReference type="InterPro" id="IPR012340">
    <property type="entry name" value="NA-bd_OB-fold"/>
</dbReference>
<dbReference type="InterPro" id="IPR045060">
    <property type="entry name" value="Phe-tRNA-ligase_IIc_bsu"/>
</dbReference>
<dbReference type="InterPro" id="IPR004532">
    <property type="entry name" value="Phe-tRNA-ligase_IIc_bsu_bact"/>
</dbReference>
<dbReference type="InterPro" id="IPR020825">
    <property type="entry name" value="Phe-tRNA_synthase-like_B3/B4"/>
</dbReference>
<dbReference type="InterPro" id="IPR041616">
    <property type="entry name" value="PheRS_beta_core"/>
</dbReference>
<dbReference type="InterPro" id="IPR002547">
    <property type="entry name" value="tRNA-bd_dom"/>
</dbReference>
<dbReference type="InterPro" id="IPR033714">
    <property type="entry name" value="tRNA_bind_bactPheRS"/>
</dbReference>
<dbReference type="InterPro" id="IPR005147">
    <property type="entry name" value="tRNA_synthase_B5-dom"/>
</dbReference>
<dbReference type="NCBIfam" id="TIGR00472">
    <property type="entry name" value="pheT_bact"/>
    <property type="match status" value="1"/>
</dbReference>
<dbReference type="NCBIfam" id="NF045760">
    <property type="entry name" value="YtpR"/>
    <property type="match status" value="1"/>
</dbReference>
<dbReference type="PANTHER" id="PTHR10947:SF0">
    <property type="entry name" value="PHENYLALANINE--TRNA LIGASE BETA SUBUNIT"/>
    <property type="match status" value="1"/>
</dbReference>
<dbReference type="PANTHER" id="PTHR10947">
    <property type="entry name" value="PHENYLALANYL-TRNA SYNTHETASE BETA CHAIN AND LEUCINE-RICH REPEAT-CONTAINING PROTEIN 47"/>
    <property type="match status" value="1"/>
</dbReference>
<dbReference type="Pfam" id="PF03483">
    <property type="entry name" value="B3_4"/>
    <property type="match status" value="1"/>
</dbReference>
<dbReference type="Pfam" id="PF03484">
    <property type="entry name" value="B5"/>
    <property type="match status" value="1"/>
</dbReference>
<dbReference type="Pfam" id="PF03147">
    <property type="entry name" value="FDX-ACB"/>
    <property type="match status" value="1"/>
</dbReference>
<dbReference type="Pfam" id="PF01588">
    <property type="entry name" value="tRNA_bind"/>
    <property type="match status" value="1"/>
</dbReference>
<dbReference type="Pfam" id="PF17759">
    <property type="entry name" value="tRNA_synthFbeta"/>
    <property type="match status" value="1"/>
</dbReference>
<dbReference type="SMART" id="SM00873">
    <property type="entry name" value="B3_4"/>
    <property type="match status" value="1"/>
</dbReference>
<dbReference type="SMART" id="SM00874">
    <property type="entry name" value="B5"/>
    <property type="match status" value="1"/>
</dbReference>
<dbReference type="SMART" id="SM00896">
    <property type="entry name" value="FDX-ACB"/>
    <property type="match status" value="1"/>
</dbReference>
<dbReference type="SUPFAM" id="SSF54991">
    <property type="entry name" value="Anticodon-binding domain of PheRS"/>
    <property type="match status" value="1"/>
</dbReference>
<dbReference type="SUPFAM" id="SSF55681">
    <property type="entry name" value="Class II aaRS and biotin synthetases"/>
    <property type="match status" value="1"/>
</dbReference>
<dbReference type="SUPFAM" id="SSF50249">
    <property type="entry name" value="Nucleic acid-binding proteins"/>
    <property type="match status" value="1"/>
</dbReference>
<dbReference type="SUPFAM" id="SSF56037">
    <property type="entry name" value="PheT/TilS domain"/>
    <property type="match status" value="1"/>
</dbReference>
<dbReference type="SUPFAM" id="SSF46955">
    <property type="entry name" value="Putative DNA-binding domain"/>
    <property type="match status" value="1"/>
</dbReference>
<dbReference type="PROSITE" id="PS51483">
    <property type="entry name" value="B5"/>
    <property type="match status" value="1"/>
</dbReference>
<dbReference type="PROSITE" id="PS51447">
    <property type="entry name" value="FDX_ACB"/>
    <property type="match status" value="1"/>
</dbReference>
<dbReference type="PROSITE" id="PS50886">
    <property type="entry name" value="TRBD"/>
    <property type="match status" value="1"/>
</dbReference>
<reference key="1">
    <citation type="journal article" date="2006" name="J. Bacteriol.">
        <title>The genome sequence of the obligately chemolithoautotrophic, facultatively anaerobic bacterium Thiobacillus denitrificans.</title>
        <authorList>
            <person name="Beller H.R."/>
            <person name="Chain P.S."/>
            <person name="Letain T.E."/>
            <person name="Chakicherla A."/>
            <person name="Larimer F.W."/>
            <person name="Richardson P.M."/>
            <person name="Coleman M.A."/>
            <person name="Wood A.P."/>
            <person name="Kelly D.P."/>
        </authorList>
    </citation>
    <scope>NUCLEOTIDE SEQUENCE [LARGE SCALE GENOMIC DNA]</scope>
    <source>
        <strain>ATCC 25259 / T1</strain>
    </source>
</reference>
<organism>
    <name type="scientific">Thiobacillus denitrificans (strain ATCC 25259 / T1)</name>
    <dbReference type="NCBI Taxonomy" id="292415"/>
    <lineage>
        <taxon>Bacteria</taxon>
        <taxon>Pseudomonadati</taxon>
        <taxon>Pseudomonadota</taxon>
        <taxon>Betaproteobacteria</taxon>
        <taxon>Nitrosomonadales</taxon>
        <taxon>Thiobacillaceae</taxon>
        <taxon>Thiobacillus</taxon>
    </lineage>
</organism>
<protein>
    <recommendedName>
        <fullName evidence="1">Phenylalanine--tRNA ligase beta subunit</fullName>
        <ecNumber evidence="1">6.1.1.20</ecNumber>
    </recommendedName>
    <alternativeName>
        <fullName evidence="1">Phenylalanyl-tRNA synthetase beta subunit</fullName>
        <shortName evidence="1">PheRS</shortName>
    </alternativeName>
</protein>
<keyword id="KW-0030">Aminoacyl-tRNA synthetase</keyword>
<keyword id="KW-0067">ATP-binding</keyword>
<keyword id="KW-0963">Cytoplasm</keyword>
<keyword id="KW-0436">Ligase</keyword>
<keyword id="KW-0460">Magnesium</keyword>
<keyword id="KW-0479">Metal-binding</keyword>
<keyword id="KW-0547">Nucleotide-binding</keyword>
<keyword id="KW-0648">Protein biosynthesis</keyword>
<keyword id="KW-1185">Reference proteome</keyword>
<keyword id="KW-0694">RNA-binding</keyword>
<keyword id="KW-0820">tRNA-binding</keyword>